<accession>B1I9N6</accession>
<evidence type="ECO:0000255" key="1">
    <source>
        <dbReference type="HAMAP-Rule" id="MF_00435"/>
    </source>
</evidence>
<evidence type="ECO:0000255" key="2">
    <source>
        <dbReference type="PROSITE-ProRule" id="PRU01197"/>
    </source>
</evidence>
<evidence type="ECO:0000255" key="3">
    <source>
        <dbReference type="PROSITE-ProRule" id="PRU01198"/>
    </source>
</evidence>
<comment type="function">
    <text evidence="1">Involved in the biosynthesis of branched-chain amino acids (BCAA). Catalyzes an alkyl-migration followed by a ketol-acid reduction of (S)-2-acetolactate (S2AL) to yield (R)-2,3-dihydroxy-isovalerate. In the isomerase reaction, S2AL is rearranged via a Mg-dependent methyl migration to produce 3-hydroxy-3-methyl-2-ketobutyrate (HMKB). In the reductase reaction, this 2-ketoacid undergoes a metal-dependent reduction by NADPH to yield (R)-2,3-dihydroxy-isovalerate.</text>
</comment>
<comment type="catalytic activity">
    <reaction evidence="1">
        <text>(2R)-2,3-dihydroxy-3-methylbutanoate + NADP(+) = (2S)-2-acetolactate + NADPH + H(+)</text>
        <dbReference type="Rhea" id="RHEA:22068"/>
        <dbReference type="ChEBI" id="CHEBI:15378"/>
        <dbReference type="ChEBI" id="CHEBI:49072"/>
        <dbReference type="ChEBI" id="CHEBI:57783"/>
        <dbReference type="ChEBI" id="CHEBI:58349"/>
        <dbReference type="ChEBI" id="CHEBI:58476"/>
        <dbReference type="EC" id="1.1.1.86"/>
    </reaction>
</comment>
<comment type="catalytic activity">
    <reaction evidence="1">
        <text>(2R,3R)-2,3-dihydroxy-3-methylpentanoate + NADP(+) = (S)-2-ethyl-2-hydroxy-3-oxobutanoate + NADPH + H(+)</text>
        <dbReference type="Rhea" id="RHEA:13493"/>
        <dbReference type="ChEBI" id="CHEBI:15378"/>
        <dbReference type="ChEBI" id="CHEBI:49256"/>
        <dbReference type="ChEBI" id="CHEBI:49258"/>
        <dbReference type="ChEBI" id="CHEBI:57783"/>
        <dbReference type="ChEBI" id="CHEBI:58349"/>
        <dbReference type="EC" id="1.1.1.86"/>
    </reaction>
</comment>
<comment type="cofactor">
    <cofactor evidence="1">
        <name>Mg(2+)</name>
        <dbReference type="ChEBI" id="CHEBI:18420"/>
    </cofactor>
    <text evidence="1">Binds 2 magnesium ions per subunit.</text>
</comment>
<comment type="pathway">
    <text evidence="1">Amino-acid biosynthesis; L-isoleucine biosynthesis; L-isoleucine from 2-oxobutanoate: step 2/4.</text>
</comment>
<comment type="pathway">
    <text evidence="1">Amino-acid biosynthesis; L-valine biosynthesis; L-valine from pyruvate: step 2/4.</text>
</comment>
<comment type="similarity">
    <text evidence="1">Belongs to the ketol-acid reductoisomerase family.</text>
</comment>
<keyword id="KW-0028">Amino-acid biosynthesis</keyword>
<keyword id="KW-0100">Branched-chain amino acid biosynthesis</keyword>
<keyword id="KW-0460">Magnesium</keyword>
<keyword id="KW-0479">Metal-binding</keyword>
<keyword id="KW-0521">NADP</keyword>
<keyword id="KW-0560">Oxidoreductase</keyword>
<feature type="chain" id="PRO_1000190999" description="Ketol-acid reductoisomerase (NADP(+))">
    <location>
        <begin position="1"/>
        <end position="340"/>
    </location>
</feature>
<feature type="domain" description="KARI N-terminal Rossmann" evidence="2">
    <location>
        <begin position="3"/>
        <end position="182"/>
    </location>
</feature>
<feature type="domain" description="KARI C-terminal knotted" evidence="3">
    <location>
        <begin position="183"/>
        <end position="328"/>
    </location>
</feature>
<feature type="active site" evidence="1">
    <location>
        <position position="108"/>
    </location>
</feature>
<feature type="binding site" evidence="1">
    <location>
        <begin position="26"/>
        <end position="29"/>
    </location>
    <ligand>
        <name>NADP(+)</name>
        <dbReference type="ChEBI" id="CHEBI:58349"/>
    </ligand>
</feature>
<feature type="binding site" evidence="1">
    <location>
        <position position="49"/>
    </location>
    <ligand>
        <name>NADP(+)</name>
        <dbReference type="ChEBI" id="CHEBI:58349"/>
    </ligand>
</feature>
<feature type="binding site" evidence="1">
    <location>
        <position position="53"/>
    </location>
    <ligand>
        <name>NADP(+)</name>
        <dbReference type="ChEBI" id="CHEBI:58349"/>
    </ligand>
</feature>
<feature type="binding site" evidence="1">
    <location>
        <begin position="83"/>
        <end position="86"/>
    </location>
    <ligand>
        <name>NADP(+)</name>
        <dbReference type="ChEBI" id="CHEBI:58349"/>
    </ligand>
</feature>
<feature type="binding site" evidence="1">
    <location>
        <position position="134"/>
    </location>
    <ligand>
        <name>NADP(+)</name>
        <dbReference type="ChEBI" id="CHEBI:58349"/>
    </ligand>
</feature>
<feature type="binding site" evidence="1">
    <location>
        <position position="191"/>
    </location>
    <ligand>
        <name>Mg(2+)</name>
        <dbReference type="ChEBI" id="CHEBI:18420"/>
        <label>1</label>
    </ligand>
</feature>
<feature type="binding site" evidence="1">
    <location>
        <position position="191"/>
    </location>
    <ligand>
        <name>Mg(2+)</name>
        <dbReference type="ChEBI" id="CHEBI:18420"/>
        <label>2</label>
    </ligand>
</feature>
<feature type="binding site" evidence="1">
    <location>
        <position position="195"/>
    </location>
    <ligand>
        <name>Mg(2+)</name>
        <dbReference type="ChEBI" id="CHEBI:18420"/>
        <label>1</label>
    </ligand>
</feature>
<feature type="binding site" evidence="1">
    <location>
        <position position="227"/>
    </location>
    <ligand>
        <name>Mg(2+)</name>
        <dbReference type="ChEBI" id="CHEBI:18420"/>
        <label>2</label>
    </ligand>
</feature>
<feature type="binding site" evidence="1">
    <location>
        <position position="231"/>
    </location>
    <ligand>
        <name>Mg(2+)</name>
        <dbReference type="ChEBI" id="CHEBI:18420"/>
        <label>2</label>
    </ligand>
</feature>
<feature type="binding site" evidence="1">
    <location>
        <position position="252"/>
    </location>
    <ligand>
        <name>substrate</name>
    </ligand>
</feature>
<sequence>MTVQMEYEKDVKVAALDGKKIAVIGYGSQGHAHAQNLRDSGRDVIIGVRPGKSFDKAKEDGFDTYTVVEATKLADVIMILAPDEIQQELYEAEIAPNLEAGNAVGFAHGFNIHFEFIKVPADVDVFMCAPKGPGHLVRRTYEEGFGVPALYAVYQDATGNAKNIAMDWCKGVGAARVGLLETTYKEETEEDLFGEQAVLCGGLTALIEAGFEVLTEAGYAPELAYFEVLHEMKLIVDLIYEGGFKKMRQSISNTAEYGDYVSGPRVITEQVKENMKAVLADIQNGKFANDFVNDYKAGRPKLTAYREQAANLEIEKVGAELRKAMPFVGKNDDDAFKIYN</sequence>
<name>ILVC_STRPI</name>
<proteinExistence type="inferred from homology"/>
<protein>
    <recommendedName>
        <fullName evidence="1">Ketol-acid reductoisomerase (NADP(+))</fullName>
        <shortName evidence="1">KARI</shortName>
        <ecNumber evidence="1">1.1.1.86</ecNumber>
    </recommendedName>
    <alternativeName>
        <fullName evidence="1">Acetohydroxy-acid isomeroreductase</fullName>
        <shortName evidence="1">AHIR</shortName>
    </alternativeName>
    <alternativeName>
        <fullName evidence="1">Alpha-keto-beta-hydroxylacyl reductoisomerase</fullName>
    </alternativeName>
    <alternativeName>
        <fullName evidence="1">Ketol-acid reductoisomerase type 1</fullName>
    </alternativeName>
    <alternativeName>
        <fullName evidence="1">Ketol-acid reductoisomerase type I</fullName>
    </alternativeName>
</protein>
<dbReference type="EC" id="1.1.1.86" evidence="1"/>
<dbReference type="EMBL" id="CP000936">
    <property type="protein sequence ID" value="ACA36002.1"/>
    <property type="molecule type" value="Genomic_DNA"/>
</dbReference>
<dbReference type="RefSeq" id="WP_000218063.1">
    <property type="nucleotide sequence ID" value="NC_010380.1"/>
</dbReference>
<dbReference type="SMR" id="B1I9N6"/>
<dbReference type="KEGG" id="spv:SPH_0553"/>
<dbReference type="HOGENOM" id="CLU_033821_0_1_9"/>
<dbReference type="UniPathway" id="UPA00047">
    <property type="reaction ID" value="UER00056"/>
</dbReference>
<dbReference type="UniPathway" id="UPA00049">
    <property type="reaction ID" value="UER00060"/>
</dbReference>
<dbReference type="Proteomes" id="UP000002163">
    <property type="component" value="Chromosome"/>
</dbReference>
<dbReference type="GO" id="GO:0005829">
    <property type="term" value="C:cytosol"/>
    <property type="evidence" value="ECO:0007669"/>
    <property type="project" value="TreeGrafter"/>
</dbReference>
<dbReference type="GO" id="GO:0004455">
    <property type="term" value="F:ketol-acid reductoisomerase activity"/>
    <property type="evidence" value="ECO:0007669"/>
    <property type="project" value="UniProtKB-UniRule"/>
</dbReference>
<dbReference type="GO" id="GO:0000287">
    <property type="term" value="F:magnesium ion binding"/>
    <property type="evidence" value="ECO:0007669"/>
    <property type="project" value="UniProtKB-UniRule"/>
</dbReference>
<dbReference type="GO" id="GO:0050661">
    <property type="term" value="F:NADP binding"/>
    <property type="evidence" value="ECO:0007669"/>
    <property type="project" value="InterPro"/>
</dbReference>
<dbReference type="GO" id="GO:0009097">
    <property type="term" value="P:isoleucine biosynthetic process"/>
    <property type="evidence" value="ECO:0007669"/>
    <property type="project" value="UniProtKB-UniRule"/>
</dbReference>
<dbReference type="GO" id="GO:0009099">
    <property type="term" value="P:L-valine biosynthetic process"/>
    <property type="evidence" value="ECO:0007669"/>
    <property type="project" value="UniProtKB-UniRule"/>
</dbReference>
<dbReference type="FunFam" id="3.40.50.720:FF:000023">
    <property type="entry name" value="Ketol-acid reductoisomerase (NADP(+))"/>
    <property type="match status" value="1"/>
</dbReference>
<dbReference type="Gene3D" id="6.10.240.10">
    <property type="match status" value="1"/>
</dbReference>
<dbReference type="Gene3D" id="3.40.50.720">
    <property type="entry name" value="NAD(P)-binding Rossmann-like Domain"/>
    <property type="match status" value="1"/>
</dbReference>
<dbReference type="HAMAP" id="MF_00435">
    <property type="entry name" value="IlvC"/>
    <property type="match status" value="1"/>
</dbReference>
<dbReference type="InterPro" id="IPR008927">
    <property type="entry name" value="6-PGluconate_DH-like_C_sf"/>
</dbReference>
<dbReference type="InterPro" id="IPR013023">
    <property type="entry name" value="KARI"/>
</dbReference>
<dbReference type="InterPro" id="IPR000506">
    <property type="entry name" value="KARI_C"/>
</dbReference>
<dbReference type="InterPro" id="IPR013116">
    <property type="entry name" value="KARI_N"/>
</dbReference>
<dbReference type="InterPro" id="IPR014359">
    <property type="entry name" value="KARI_prok"/>
</dbReference>
<dbReference type="InterPro" id="IPR036291">
    <property type="entry name" value="NAD(P)-bd_dom_sf"/>
</dbReference>
<dbReference type="NCBIfam" id="TIGR00465">
    <property type="entry name" value="ilvC"/>
    <property type="match status" value="1"/>
</dbReference>
<dbReference type="NCBIfam" id="NF004017">
    <property type="entry name" value="PRK05479.1"/>
    <property type="match status" value="1"/>
</dbReference>
<dbReference type="NCBIfam" id="NF009940">
    <property type="entry name" value="PRK13403.1"/>
    <property type="match status" value="1"/>
</dbReference>
<dbReference type="PANTHER" id="PTHR21371">
    <property type="entry name" value="KETOL-ACID REDUCTOISOMERASE, MITOCHONDRIAL"/>
    <property type="match status" value="1"/>
</dbReference>
<dbReference type="PANTHER" id="PTHR21371:SF1">
    <property type="entry name" value="KETOL-ACID REDUCTOISOMERASE, MITOCHONDRIAL"/>
    <property type="match status" value="1"/>
</dbReference>
<dbReference type="Pfam" id="PF01450">
    <property type="entry name" value="KARI_C"/>
    <property type="match status" value="1"/>
</dbReference>
<dbReference type="Pfam" id="PF07991">
    <property type="entry name" value="KARI_N"/>
    <property type="match status" value="1"/>
</dbReference>
<dbReference type="PIRSF" id="PIRSF000116">
    <property type="entry name" value="IlvC_gammaproteo"/>
    <property type="match status" value="1"/>
</dbReference>
<dbReference type="SUPFAM" id="SSF48179">
    <property type="entry name" value="6-phosphogluconate dehydrogenase C-terminal domain-like"/>
    <property type="match status" value="1"/>
</dbReference>
<dbReference type="SUPFAM" id="SSF51735">
    <property type="entry name" value="NAD(P)-binding Rossmann-fold domains"/>
    <property type="match status" value="1"/>
</dbReference>
<dbReference type="PROSITE" id="PS51851">
    <property type="entry name" value="KARI_C"/>
    <property type="match status" value="1"/>
</dbReference>
<dbReference type="PROSITE" id="PS51850">
    <property type="entry name" value="KARI_N"/>
    <property type="match status" value="1"/>
</dbReference>
<reference key="1">
    <citation type="journal article" date="2010" name="Genome Biol.">
        <title>Structure and dynamics of the pan-genome of Streptococcus pneumoniae and closely related species.</title>
        <authorList>
            <person name="Donati C."/>
            <person name="Hiller N.L."/>
            <person name="Tettelin H."/>
            <person name="Muzzi A."/>
            <person name="Croucher N.J."/>
            <person name="Angiuoli S.V."/>
            <person name="Oggioni M."/>
            <person name="Dunning Hotopp J.C."/>
            <person name="Hu F.Z."/>
            <person name="Riley D.R."/>
            <person name="Covacci A."/>
            <person name="Mitchell T.J."/>
            <person name="Bentley S.D."/>
            <person name="Kilian M."/>
            <person name="Ehrlich G.D."/>
            <person name="Rappuoli R."/>
            <person name="Moxon E.R."/>
            <person name="Masignani V."/>
        </authorList>
    </citation>
    <scope>NUCLEOTIDE SEQUENCE [LARGE SCALE GENOMIC DNA]</scope>
    <source>
        <strain>Hungary19A-6</strain>
    </source>
</reference>
<gene>
    <name evidence="1" type="primary">ilvC</name>
    <name type="ordered locus">SPH_0553</name>
</gene>
<organism>
    <name type="scientific">Streptococcus pneumoniae (strain Hungary19A-6)</name>
    <dbReference type="NCBI Taxonomy" id="487214"/>
    <lineage>
        <taxon>Bacteria</taxon>
        <taxon>Bacillati</taxon>
        <taxon>Bacillota</taxon>
        <taxon>Bacilli</taxon>
        <taxon>Lactobacillales</taxon>
        <taxon>Streptococcaceae</taxon>
        <taxon>Streptococcus</taxon>
    </lineage>
</organism>